<gene>
    <name evidence="3" type="primary">tusA</name>
    <name evidence="6" type="ordered locus">Alvin_2600</name>
</gene>
<keyword id="KW-0963">Cytoplasm</keyword>
<keyword id="KW-1015">Disulfide bond</keyword>
<keyword id="KW-1185">Reference proteome</keyword>
<proteinExistence type="evidence at protein level"/>
<protein>
    <recommendedName>
        <fullName evidence="5">Sulfur carrier protein TusA</fullName>
    </recommendedName>
</protein>
<feature type="chain" id="PRO_0000439098" description="Sulfur carrier protein TusA">
    <location>
        <begin position="1"/>
        <end position="76"/>
    </location>
</feature>
<feature type="active site" description="Cysteine persulfide intermediate" evidence="2">
    <location>
        <position position="15"/>
    </location>
</feature>
<feature type="mutagenesis site" description="Loss of sulfur binding in the presence of sulfide. Loss of interaction with DsrEFH proteins." evidence="2">
    <original>C</original>
    <variation>S</variation>
    <location>
        <position position="15"/>
    </location>
</feature>
<accession>D3RPC0</accession>
<reference key="1">
    <citation type="journal article" date="2011" name="Stand. Genomic Sci.">
        <title>Complete genome sequence of Allochromatium vinosum DSM 180(T).</title>
        <authorList>
            <person name="Weissgerber T."/>
            <person name="Zigann R."/>
            <person name="Bruce D."/>
            <person name="Chang Y.J."/>
            <person name="Detter J.C."/>
            <person name="Han C."/>
            <person name="Hauser L."/>
            <person name="Jeffries C.D."/>
            <person name="Land M."/>
            <person name="Munk A.C."/>
            <person name="Tapia R."/>
            <person name="Dahl C."/>
        </authorList>
    </citation>
    <scope>NUCLEOTIDE SEQUENCE [LARGE SCALE GENOMIC DNA]</scope>
    <source>
        <strain>ATCC 17899 / DSM 180 / NBRC 103801 / NCIMB 10441 / D</strain>
    </source>
</reference>
<reference key="2">
    <citation type="journal article" date="2014" name="Appl. Environ. Microbiol.">
        <title>A comparative quantitative proteomic study identifies new proteins relevant for sulfur oxidation in the purple sulfur bacterium Allochromatium vinosum.</title>
        <authorList>
            <person name="Weissgerber T."/>
            <person name="Sylvester M."/>
            <person name="Kroeninger L."/>
            <person name="Dahl C."/>
        </authorList>
    </citation>
    <scope>IDENTIFICATION BY MASS SPECTROMETRY</scope>
    <scope>INDUCTION</scope>
    <source>
        <strain>ATCC 17899 / DSM 180 / NBRC 103801 / NCIMB 10441 / D</strain>
    </source>
</reference>
<reference key="3">
    <citation type="journal article" date="2014" name="J. Biol. Chem.">
        <title>New proteins involved in sulfur trafficking in the cytoplasm of Allochromatium vinosum.</title>
        <authorList>
            <person name="Stockdreher Y."/>
            <person name="Sturm M."/>
            <person name="Josten M."/>
            <person name="Sahl H.G."/>
            <person name="Dobler N."/>
            <person name="Zigann R."/>
            <person name="Dahl C."/>
        </authorList>
    </citation>
    <scope>FUNCTION</scope>
    <scope>INDUCTION</scope>
    <scope>DISRUPTION PHENOTYPE</scope>
    <scope>SUBCELLULAR LOCATION</scope>
    <scope>PATHWAY</scope>
    <scope>SUBUNIT</scope>
    <scope>SULFUR-BINDING</scope>
    <scope>MUTAGENESIS OF CYS-15</scope>
    <scope>INTERACTION WITH DSREFH</scope>
    <scope>ACTIVE SITE</scope>
    <source>
        <strain>ATCC 17899 / DSM 180 / NBRC 103801 / NCIMB 10441 / D</strain>
    </source>
</reference>
<dbReference type="EMBL" id="CP001896">
    <property type="protein sequence ID" value="ADC63510.1"/>
    <property type="molecule type" value="Genomic_DNA"/>
</dbReference>
<dbReference type="RefSeq" id="WP_012971778.1">
    <property type="nucleotide sequence ID" value="NC_013851.1"/>
</dbReference>
<dbReference type="SMR" id="D3RPC0"/>
<dbReference type="STRING" id="572477.Alvin_2600"/>
<dbReference type="KEGG" id="alv:Alvin_2600"/>
<dbReference type="eggNOG" id="COG0425">
    <property type="taxonomic scope" value="Bacteria"/>
</dbReference>
<dbReference type="HOGENOM" id="CLU_165255_1_2_6"/>
<dbReference type="OrthoDB" id="9797551at2"/>
<dbReference type="BioCyc" id="MetaCyc:MONOMER-19178"/>
<dbReference type="UniPathway" id="UPA00096"/>
<dbReference type="Proteomes" id="UP000001441">
    <property type="component" value="Chromosome"/>
</dbReference>
<dbReference type="GO" id="GO:0005737">
    <property type="term" value="C:cytoplasm"/>
    <property type="evidence" value="ECO:0007669"/>
    <property type="project" value="UniProtKB-SubCell"/>
</dbReference>
<dbReference type="GO" id="GO:0006790">
    <property type="term" value="P:sulfur compound metabolic process"/>
    <property type="evidence" value="ECO:0007669"/>
    <property type="project" value="UniProtKB-UniPathway"/>
</dbReference>
<dbReference type="CDD" id="cd00291">
    <property type="entry name" value="SirA_YedF_YeeD"/>
    <property type="match status" value="1"/>
</dbReference>
<dbReference type="Gene3D" id="3.30.110.40">
    <property type="entry name" value="TusA-like domain"/>
    <property type="match status" value="1"/>
</dbReference>
<dbReference type="InterPro" id="IPR001455">
    <property type="entry name" value="TusA-like"/>
</dbReference>
<dbReference type="InterPro" id="IPR036868">
    <property type="entry name" value="TusA-like_sf"/>
</dbReference>
<dbReference type="PANTHER" id="PTHR33279">
    <property type="entry name" value="SULFUR CARRIER PROTEIN YEDF-RELATED"/>
    <property type="match status" value="1"/>
</dbReference>
<dbReference type="PANTHER" id="PTHR33279:SF6">
    <property type="entry name" value="SULFUR CARRIER PROTEIN YEDF-RELATED"/>
    <property type="match status" value="1"/>
</dbReference>
<dbReference type="Pfam" id="PF01206">
    <property type="entry name" value="TusA"/>
    <property type="match status" value="1"/>
</dbReference>
<dbReference type="SUPFAM" id="SSF64307">
    <property type="entry name" value="SirA-like"/>
    <property type="match status" value="1"/>
</dbReference>
<dbReference type="PROSITE" id="PS01148">
    <property type="entry name" value="UPF0033"/>
    <property type="match status" value="1"/>
</dbReference>
<sequence length="76" mass="8268">MADFDQELDASGLNCPLPILRAKKTLNAMSSGQVLHVIATDPGSVKDFDAFAKQTGNELMESKEEGGKFHFLIKKS</sequence>
<comment type="function">
    <text evidence="2 4">Sulfur carrier protein involved in sulfur trafficking for oxidative dissimilatory sulfur metabolism. Component of a sulfur relay system that starts with the sulfur-mobilizing rhodanese-like protein Rhd_2599 (Alvin_2599), which transfers the sulfur from a low-molecular-weight thiol, maybe glutathione, to the TusA protein (Alvin_2600); TusA serves as the sulfur donor for DsrEFH, which persulfurates DsrC; persulfurated DsrC very probably serves as a direct substrate for reverse-acting sulfite reductase, DsrAB. TusA seems to be not exclusively dedicated to sulfur oxidation and may have other important roles in the cell. Might also act as a sulfur mediator required for 2-thiouridine formation of tRNA.</text>
</comment>
<comment type="pathway">
    <text evidence="5">Energy metabolism; sulfur metabolism.</text>
</comment>
<comment type="subunit">
    <text evidence="2">Mostly a monomer, a small portion forms homodimer via intermolecular disulfide bonds. Tightly interacts with DsrEFH.</text>
</comment>
<comment type="subcellular location">
    <subcellularLocation>
        <location evidence="5">Cytoplasm</location>
    </subcellularLocation>
</comment>
<comment type="induction">
    <text evidence="1 2">Up-regulated under sulfur-oxidizing conditions (at mRNA level), i.e. when grown on reduced sulfur compounds such as sulfide, thiosulfate or elemental sulfur (PubMed:24648525). TusA is one of the major proteins in A.vinosum cells grown on malate or on reduced sulfur compounds (PubMed:24487535).</text>
</comment>
<comment type="disruption phenotype">
    <text evidence="2">A mutant strain lacking rhd_2599, tusA and dsrE2, although not viable in liquid culture, is clearly sulfur oxidation negative upon growth on solid media containing sulfide, and shows massive accumulation of intercellular sulfur globules.</text>
</comment>
<comment type="similarity">
    <text evidence="4">Belongs to the sulfur carrier protein TusA family.</text>
</comment>
<name>TUSA_ALLVD</name>
<evidence type="ECO:0000269" key="1">
    <source>
    </source>
</evidence>
<evidence type="ECO:0000269" key="2">
    <source>
    </source>
</evidence>
<evidence type="ECO:0000303" key="3">
    <source>
    </source>
</evidence>
<evidence type="ECO:0000305" key="4"/>
<evidence type="ECO:0000305" key="5">
    <source>
    </source>
</evidence>
<evidence type="ECO:0000312" key="6">
    <source>
        <dbReference type="EMBL" id="ADC63510.1"/>
    </source>
</evidence>
<organism>
    <name type="scientific">Allochromatium vinosum (strain ATCC 17899 / DSM 180 / NBRC 103801 / NCIMB 10441 / D)</name>
    <name type="common">Chromatium vinosum</name>
    <dbReference type="NCBI Taxonomy" id="572477"/>
    <lineage>
        <taxon>Bacteria</taxon>
        <taxon>Pseudomonadati</taxon>
        <taxon>Pseudomonadota</taxon>
        <taxon>Gammaproteobacteria</taxon>
        <taxon>Chromatiales</taxon>
        <taxon>Chromatiaceae</taxon>
        <taxon>Allochromatium</taxon>
    </lineage>
</organism>